<organism>
    <name type="scientific">Caenorhabditis elegans</name>
    <dbReference type="NCBI Taxonomy" id="6239"/>
    <lineage>
        <taxon>Eukaryota</taxon>
        <taxon>Metazoa</taxon>
        <taxon>Ecdysozoa</taxon>
        <taxon>Nematoda</taxon>
        <taxon>Chromadorea</taxon>
        <taxon>Rhabditida</taxon>
        <taxon>Rhabditina</taxon>
        <taxon>Rhabditomorpha</taxon>
        <taxon>Rhabditoidea</taxon>
        <taxon>Rhabditidae</taxon>
        <taxon>Peloderinae</taxon>
        <taxon>Caenorhabditis</taxon>
    </lineage>
</organism>
<dbReference type="EMBL" id="FO080132">
    <property type="protein sequence ID" value="CCD61473.1"/>
    <property type="molecule type" value="Genomic_DNA"/>
</dbReference>
<dbReference type="RefSeq" id="NP_495615.2">
    <property type="nucleotide sequence ID" value="NM_063214.5"/>
</dbReference>
<dbReference type="SMR" id="Q09214"/>
<dbReference type="BioGRID" id="39577">
    <property type="interactions" value="6"/>
</dbReference>
<dbReference type="FunCoup" id="Q09214">
    <property type="interactions" value="2056"/>
</dbReference>
<dbReference type="IntAct" id="Q09214">
    <property type="interactions" value="1"/>
</dbReference>
<dbReference type="MINT" id="Q09214"/>
<dbReference type="STRING" id="6239.B0495.5.1"/>
<dbReference type="PaxDb" id="6239-B0495.5.1"/>
<dbReference type="PeptideAtlas" id="Q09214"/>
<dbReference type="EnsemblMetazoa" id="B0495.5.1">
    <property type="protein sequence ID" value="B0495.5.1"/>
    <property type="gene ID" value="WBGene00015204"/>
</dbReference>
<dbReference type="EnsemblMetazoa" id="B0495.5.2">
    <property type="protein sequence ID" value="B0495.5.2"/>
    <property type="gene ID" value="WBGene00015204"/>
</dbReference>
<dbReference type="GeneID" id="174243"/>
<dbReference type="KEGG" id="cel:CELE_B0495.5"/>
<dbReference type="UCSC" id="B0495.5.1">
    <property type="organism name" value="c. elegans"/>
</dbReference>
<dbReference type="AGR" id="WB:WBGene00015204"/>
<dbReference type="CTD" id="174243"/>
<dbReference type="WormBase" id="B0495.5">
    <property type="protein sequence ID" value="CE29948"/>
    <property type="gene ID" value="WBGene00015204"/>
</dbReference>
<dbReference type="eggNOG" id="KOG2244">
    <property type="taxonomic scope" value="Eukaryota"/>
</dbReference>
<dbReference type="GeneTree" id="ENSGT00390000004836"/>
<dbReference type="HOGENOM" id="CLU_014051_4_1_1"/>
<dbReference type="InParanoid" id="Q09214"/>
<dbReference type="OMA" id="PFYFGTY"/>
<dbReference type="OrthoDB" id="1923667at2759"/>
<dbReference type="PhylomeDB" id="Q09214"/>
<dbReference type="PRO" id="PR:Q09214"/>
<dbReference type="Proteomes" id="UP000001940">
    <property type="component" value="Chromosome II"/>
</dbReference>
<dbReference type="Bgee" id="WBGene00015204">
    <property type="expression patterns" value="Expressed in germ line (C elegans) and 4 other cell types or tissues"/>
</dbReference>
<dbReference type="GO" id="GO:0005975">
    <property type="term" value="P:carbohydrate metabolic process"/>
    <property type="evidence" value="ECO:0007669"/>
    <property type="project" value="InterPro"/>
</dbReference>
<dbReference type="CDD" id="cd02955">
    <property type="entry name" value="SSP411"/>
    <property type="match status" value="1"/>
</dbReference>
<dbReference type="Gene3D" id="1.50.10.20">
    <property type="match status" value="1"/>
</dbReference>
<dbReference type="Gene3D" id="3.40.30.10">
    <property type="entry name" value="Glutaredoxin"/>
    <property type="match status" value="1"/>
</dbReference>
<dbReference type="InterPro" id="IPR008928">
    <property type="entry name" value="6-hairpin_glycosidase_sf"/>
</dbReference>
<dbReference type="InterPro" id="IPR024705">
    <property type="entry name" value="Ssp411"/>
</dbReference>
<dbReference type="InterPro" id="IPR004879">
    <property type="entry name" value="Ssp411-like_TRX"/>
</dbReference>
<dbReference type="InterPro" id="IPR036249">
    <property type="entry name" value="Thioredoxin-like_sf"/>
</dbReference>
<dbReference type="PANTHER" id="PTHR42899">
    <property type="entry name" value="SPERMATOGENESIS-ASSOCIATED PROTEIN 20"/>
    <property type="match status" value="1"/>
</dbReference>
<dbReference type="PANTHER" id="PTHR42899:SF1">
    <property type="entry name" value="SPERMATOGENESIS-ASSOCIATED PROTEIN 20"/>
    <property type="match status" value="1"/>
</dbReference>
<dbReference type="Pfam" id="PF03190">
    <property type="entry name" value="Thioredox_DsbH"/>
    <property type="match status" value="1"/>
</dbReference>
<dbReference type="PIRSF" id="PIRSF006402">
    <property type="entry name" value="UCP006402_thioredoxin"/>
    <property type="match status" value="1"/>
</dbReference>
<dbReference type="SUPFAM" id="SSF48208">
    <property type="entry name" value="Six-hairpin glycosidases"/>
    <property type="match status" value="1"/>
</dbReference>
<dbReference type="SUPFAM" id="SSF52833">
    <property type="entry name" value="Thioredoxin-like"/>
    <property type="match status" value="1"/>
</dbReference>
<protein>
    <recommendedName>
        <fullName>Uncharacterized protein B0495.5</fullName>
    </recommendedName>
</protein>
<proteinExistence type="predicted"/>
<keyword id="KW-1185">Reference proteome</keyword>
<accession>Q09214</accession>
<reference key="1">
    <citation type="journal article" date="1998" name="Science">
        <title>Genome sequence of the nematode C. elegans: a platform for investigating biology.</title>
        <authorList>
            <consortium name="The C. elegans sequencing consortium"/>
        </authorList>
    </citation>
    <scope>NUCLEOTIDE SEQUENCE [LARGE SCALE GENOMIC DNA]</scope>
    <source>
        <strain>Bristol N2</strain>
    </source>
</reference>
<feature type="chain" id="PRO_0000065086" description="Uncharacterized protein B0495.5">
    <location>
        <begin position="1"/>
        <end position="729"/>
    </location>
</feature>
<sequence length="729" mass="82413">MLRALAPITVIRMTSTYKNRLGQEKSPYLLQHANNPIDWYPWGQEAFQKAKDNNKPIFLSVGYSTCHWCHVMEKESFENEATAKILNDNFVAIKVDREERPDVDKLYMAFVVASSGHGGWPMSVFLTPDLHPITGGTYFPPDDNRGMLGFPTILNMIHTEWKKEGESLKQRGAQIIKLLQPETASGDVNRSEEVFKSIYSHKQSSFDSRLGGFGRAPKFPKACDLDFLITFAASENESEKAKDSIMMLQKTLESMADGGIHDHIGNGFHRYSVGSEWHIPHFEKMLYDQSQLLATYSDFHKLTERKHDNVKHVINDIYQYMQKISHKDGGFYAAEDADSLPNHNSSNKVEGAFCAWEKEEIKQLLGDKKIGSASLFDVVADYFDVEDSGNVARSSDPHGELKNKNVLRKLLTDEECATNHEISVAELKKGIDEAKEILWNARTQRPSPHLDSKMVTSWQGLAITGLVKAYQATEETKYLDRAEKCAEFIGKFLDDNGELRRSVYLGANGEVEQGNQEIRAFSDDYAFLIQALLDLYTTVGKDEYLKKAVELQKICDVKFWNGNGYFISEKTDEDVSVRMIEDQDGAEPTATSIASNNLLRLYDILEKEEYREKANQCFRGASERLNTVPIALPKMAVALHRWQIGSTTFVLVGDPKSELLSETRSRLNQKFLNNLSVVHIQSEEDLSASGPSHKAMAEGPKPAVYMCKGFVCDRPVKAIQELEELFNKF</sequence>
<gene>
    <name type="ORF">B0495.5</name>
</gene>
<name>YP65_CAEEL</name>